<proteinExistence type="inferred from homology"/>
<feature type="chain" id="PRO_1000047210" description="Thiopurine S-methyltransferase">
    <location>
        <begin position="1"/>
        <end position="218"/>
    </location>
</feature>
<feature type="binding site" evidence="1">
    <location>
        <position position="10"/>
    </location>
    <ligand>
        <name>S-adenosyl-L-methionine</name>
        <dbReference type="ChEBI" id="CHEBI:59789"/>
    </ligand>
</feature>
<feature type="binding site" evidence="1">
    <location>
        <position position="45"/>
    </location>
    <ligand>
        <name>S-adenosyl-L-methionine</name>
        <dbReference type="ChEBI" id="CHEBI:59789"/>
    </ligand>
</feature>
<feature type="binding site" evidence="1">
    <location>
        <position position="66"/>
    </location>
    <ligand>
        <name>S-adenosyl-L-methionine</name>
        <dbReference type="ChEBI" id="CHEBI:59789"/>
    </ligand>
</feature>
<feature type="binding site" evidence="1">
    <location>
        <position position="123"/>
    </location>
    <ligand>
        <name>S-adenosyl-L-methionine</name>
        <dbReference type="ChEBI" id="CHEBI:59789"/>
    </ligand>
</feature>
<keyword id="KW-0963">Cytoplasm</keyword>
<keyword id="KW-0489">Methyltransferase</keyword>
<keyword id="KW-0949">S-adenosyl-L-methionine</keyword>
<keyword id="KW-0808">Transferase</keyword>
<dbReference type="EC" id="2.1.1.67" evidence="1"/>
<dbReference type="EMBL" id="CP000438">
    <property type="protein sequence ID" value="ABJ12072.1"/>
    <property type="molecule type" value="Genomic_DNA"/>
</dbReference>
<dbReference type="RefSeq" id="WP_003109680.1">
    <property type="nucleotide sequence ID" value="NZ_CP034244.1"/>
</dbReference>
<dbReference type="SMR" id="Q02NZ5"/>
<dbReference type="KEGG" id="pau:PA14_27460"/>
<dbReference type="PseudoCAP" id="PA14_27460"/>
<dbReference type="HOGENOM" id="CLU_085515_1_0_6"/>
<dbReference type="BioCyc" id="PAER208963:G1G74-2281-MONOMER"/>
<dbReference type="Proteomes" id="UP000000653">
    <property type="component" value="Chromosome"/>
</dbReference>
<dbReference type="GO" id="GO:0005737">
    <property type="term" value="C:cytoplasm"/>
    <property type="evidence" value="ECO:0007669"/>
    <property type="project" value="UniProtKB-SubCell"/>
</dbReference>
<dbReference type="GO" id="GO:0008119">
    <property type="term" value="F:thiopurine S-methyltransferase activity"/>
    <property type="evidence" value="ECO:0007669"/>
    <property type="project" value="UniProtKB-UniRule"/>
</dbReference>
<dbReference type="GO" id="GO:0032259">
    <property type="term" value="P:methylation"/>
    <property type="evidence" value="ECO:0007669"/>
    <property type="project" value="UniProtKB-KW"/>
</dbReference>
<dbReference type="GO" id="GO:0010038">
    <property type="term" value="P:response to metal ion"/>
    <property type="evidence" value="ECO:0007669"/>
    <property type="project" value="InterPro"/>
</dbReference>
<dbReference type="FunFam" id="3.40.50.150:FF:000101">
    <property type="entry name" value="Thiopurine S-methyltransferase"/>
    <property type="match status" value="1"/>
</dbReference>
<dbReference type="Gene3D" id="3.40.50.150">
    <property type="entry name" value="Vaccinia Virus protein VP39"/>
    <property type="match status" value="1"/>
</dbReference>
<dbReference type="HAMAP" id="MF_00812">
    <property type="entry name" value="Thiopur_methtran"/>
    <property type="match status" value="1"/>
</dbReference>
<dbReference type="InterPro" id="IPR029063">
    <property type="entry name" value="SAM-dependent_MTases_sf"/>
</dbReference>
<dbReference type="InterPro" id="IPR022474">
    <property type="entry name" value="Thiopur_S-MeTfrase_Se/Te_detox"/>
</dbReference>
<dbReference type="InterPro" id="IPR025835">
    <property type="entry name" value="Thiopurine_S-MeTrfase"/>
</dbReference>
<dbReference type="InterPro" id="IPR008854">
    <property type="entry name" value="TPMT"/>
</dbReference>
<dbReference type="NCBIfam" id="NF009732">
    <property type="entry name" value="PRK13255.1"/>
    <property type="match status" value="1"/>
</dbReference>
<dbReference type="NCBIfam" id="TIGR03840">
    <property type="entry name" value="TMPT_Se_Te"/>
    <property type="match status" value="1"/>
</dbReference>
<dbReference type="PANTHER" id="PTHR10259">
    <property type="entry name" value="THIOPURINE S-METHYLTRANSFERASE"/>
    <property type="match status" value="1"/>
</dbReference>
<dbReference type="PANTHER" id="PTHR10259:SF11">
    <property type="entry name" value="THIOPURINE S-METHYLTRANSFERASE"/>
    <property type="match status" value="1"/>
</dbReference>
<dbReference type="Pfam" id="PF05724">
    <property type="entry name" value="TPMT"/>
    <property type="match status" value="1"/>
</dbReference>
<dbReference type="PIRSF" id="PIRSF023956">
    <property type="entry name" value="Thiopurine_S-methyltransferase"/>
    <property type="match status" value="1"/>
</dbReference>
<dbReference type="SUPFAM" id="SSF53335">
    <property type="entry name" value="S-adenosyl-L-methionine-dependent methyltransferases"/>
    <property type="match status" value="1"/>
</dbReference>
<dbReference type="PROSITE" id="PS51585">
    <property type="entry name" value="SAM_MT_TPMT"/>
    <property type="match status" value="1"/>
</dbReference>
<reference key="1">
    <citation type="journal article" date="2006" name="Genome Biol.">
        <title>Genomic analysis reveals that Pseudomonas aeruginosa virulence is combinatorial.</title>
        <authorList>
            <person name="Lee D.G."/>
            <person name="Urbach J.M."/>
            <person name="Wu G."/>
            <person name="Liberati N.T."/>
            <person name="Feinbaum R.L."/>
            <person name="Miyata S."/>
            <person name="Diggins L.T."/>
            <person name="He J."/>
            <person name="Saucier M."/>
            <person name="Deziel E."/>
            <person name="Friedman L."/>
            <person name="Li L."/>
            <person name="Grills G."/>
            <person name="Montgomery K."/>
            <person name="Kucherlapati R."/>
            <person name="Rahme L.G."/>
            <person name="Ausubel F.M."/>
        </authorList>
    </citation>
    <scope>NUCLEOTIDE SEQUENCE [LARGE SCALE GENOMIC DNA]</scope>
    <source>
        <strain>UCBPP-PA14</strain>
    </source>
</reference>
<name>TPMT_PSEAB</name>
<evidence type="ECO:0000255" key="1">
    <source>
        <dbReference type="HAMAP-Rule" id="MF_00812"/>
    </source>
</evidence>
<comment type="catalytic activity">
    <reaction evidence="1">
        <text>S-adenosyl-L-methionine + a thiopurine = S-adenosyl-L-homocysteine + a thiopurine S-methylether.</text>
        <dbReference type="EC" id="2.1.1.67"/>
    </reaction>
</comment>
<comment type="subcellular location">
    <subcellularLocation>
        <location evidence="1">Cytoplasm</location>
    </subcellularLocation>
</comment>
<comment type="similarity">
    <text evidence="1">Belongs to the class I-like SAM-binding methyltransferase superfamily. TPMT family.</text>
</comment>
<sequence length="218" mass="24863">MQADFWHARWANNQIGFHLDEINPYLMRHLSRLRLQAGERILVPLCGKTLDLAWLAAQGLEVLGVELSEKAVSDFFEEHDLRPEIDQLGGFRRYRVAGITLLQGDFFALQAEHLAQCRAFYDRAALIALPPEMRERYAGHLQAVLPTRSLGLLVTIDYPQAEMAGPPFAVPDEEVRGYYAGGWRIEELERGDVLGVNWKFLERGVSWLNEAVYLLERG</sequence>
<accession>Q02NZ5</accession>
<gene>
    <name evidence="1" type="primary">tpm</name>
    <name type="ordered locus">PA14_27460</name>
</gene>
<protein>
    <recommendedName>
        <fullName evidence="1">Thiopurine S-methyltransferase</fullName>
        <ecNumber evidence="1">2.1.1.67</ecNumber>
    </recommendedName>
    <alternativeName>
        <fullName evidence="1">Thiopurine methyltransferase</fullName>
    </alternativeName>
</protein>
<organism>
    <name type="scientific">Pseudomonas aeruginosa (strain UCBPP-PA14)</name>
    <dbReference type="NCBI Taxonomy" id="208963"/>
    <lineage>
        <taxon>Bacteria</taxon>
        <taxon>Pseudomonadati</taxon>
        <taxon>Pseudomonadota</taxon>
        <taxon>Gammaproteobacteria</taxon>
        <taxon>Pseudomonadales</taxon>
        <taxon>Pseudomonadaceae</taxon>
        <taxon>Pseudomonas</taxon>
    </lineage>
</organism>